<name>Y539_THEKO</name>
<evidence type="ECO:0000255" key="1">
    <source>
        <dbReference type="HAMAP-Rule" id="MF_00584"/>
    </source>
</evidence>
<reference key="1">
    <citation type="journal article" date="2005" name="Genome Res.">
        <title>Complete genome sequence of the hyperthermophilic archaeon Thermococcus kodakaraensis KOD1 and comparison with Pyrococcus genomes.</title>
        <authorList>
            <person name="Fukui T."/>
            <person name="Atomi H."/>
            <person name="Kanai T."/>
            <person name="Matsumi R."/>
            <person name="Fujiwara S."/>
            <person name="Imanaka T."/>
        </authorList>
    </citation>
    <scope>NUCLEOTIDE SEQUENCE [LARGE SCALE GENOMIC DNA]</scope>
    <source>
        <strain>ATCC BAA-918 / JCM 12380 / KOD1</strain>
    </source>
</reference>
<dbReference type="EMBL" id="AP006878">
    <property type="protein sequence ID" value="BAD84728.1"/>
    <property type="molecule type" value="Genomic_DNA"/>
</dbReference>
<dbReference type="RefSeq" id="WP_011249494.1">
    <property type="nucleotide sequence ID" value="NC_006624.1"/>
</dbReference>
<dbReference type="SMR" id="Q5JF28"/>
<dbReference type="FunCoup" id="Q5JF28">
    <property type="interactions" value="5"/>
</dbReference>
<dbReference type="STRING" id="69014.TK0539"/>
<dbReference type="EnsemblBacteria" id="BAD84728">
    <property type="protein sequence ID" value="BAD84728"/>
    <property type="gene ID" value="TK0539"/>
</dbReference>
<dbReference type="GeneID" id="78447052"/>
<dbReference type="KEGG" id="tko:TK0539"/>
<dbReference type="PATRIC" id="fig|69014.16.peg.527"/>
<dbReference type="eggNOG" id="arCOG04152">
    <property type="taxonomic scope" value="Archaea"/>
</dbReference>
<dbReference type="HOGENOM" id="CLU_075726_0_0_2"/>
<dbReference type="InParanoid" id="Q5JF28"/>
<dbReference type="OrthoDB" id="31424at2157"/>
<dbReference type="PhylomeDB" id="Q5JF28"/>
<dbReference type="Proteomes" id="UP000000536">
    <property type="component" value="Chromosome"/>
</dbReference>
<dbReference type="GO" id="GO:0003677">
    <property type="term" value="F:DNA binding"/>
    <property type="evidence" value="ECO:0007669"/>
    <property type="project" value="UniProtKB-KW"/>
</dbReference>
<dbReference type="GO" id="GO:0003700">
    <property type="term" value="F:DNA-binding transcription factor activity"/>
    <property type="evidence" value="ECO:0007669"/>
    <property type="project" value="UniProtKB-UniRule"/>
</dbReference>
<dbReference type="CDD" id="cd00093">
    <property type="entry name" value="HTH_XRE"/>
    <property type="match status" value="1"/>
</dbReference>
<dbReference type="Gene3D" id="1.10.260.40">
    <property type="entry name" value="lambda repressor-like DNA-binding domains"/>
    <property type="match status" value="1"/>
</dbReference>
<dbReference type="HAMAP" id="MF_00584">
    <property type="entry name" value="HTH_type_cro_C1"/>
    <property type="match status" value="1"/>
</dbReference>
<dbReference type="InterPro" id="IPR020886">
    <property type="entry name" value="Arc_TR_HTH"/>
</dbReference>
<dbReference type="InterPro" id="IPR001387">
    <property type="entry name" value="Cro/C1-type_HTH"/>
</dbReference>
<dbReference type="InterPro" id="IPR010982">
    <property type="entry name" value="Lambda_DNA-bd_dom_sf"/>
</dbReference>
<dbReference type="NCBIfam" id="NF003162">
    <property type="entry name" value="PRK04140.1"/>
    <property type="match status" value="1"/>
</dbReference>
<dbReference type="Pfam" id="PF01381">
    <property type="entry name" value="HTH_3"/>
    <property type="match status" value="1"/>
</dbReference>
<dbReference type="SMART" id="SM00530">
    <property type="entry name" value="HTH_XRE"/>
    <property type="match status" value="1"/>
</dbReference>
<dbReference type="SUPFAM" id="SSF47413">
    <property type="entry name" value="lambda repressor-like DNA-binding domains"/>
    <property type="match status" value="1"/>
</dbReference>
<dbReference type="PROSITE" id="PS50943">
    <property type="entry name" value="HTH_CROC1"/>
    <property type="match status" value="1"/>
</dbReference>
<organism>
    <name type="scientific">Thermococcus kodakarensis (strain ATCC BAA-918 / JCM 12380 / KOD1)</name>
    <name type="common">Pyrococcus kodakaraensis (strain KOD1)</name>
    <dbReference type="NCBI Taxonomy" id="69014"/>
    <lineage>
        <taxon>Archaea</taxon>
        <taxon>Methanobacteriati</taxon>
        <taxon>Methanobacteriota</taxon>
        <taxon>Thermococci</taxon>
        <taxon>Thermococcales</taxon>
        <taxon>Thermococcaceae</taxon>
        <taxon>Thermococcus</taxon>
    </lineage>
</organism>
<keyword id="KW-0238">DNA-binding</keyword>
<keyword id="KW-1185">Reference proteome</keyword>
<keyword id="KW-0804">Transcription</keyword>
<keyword id="KW-0805">Transcription regulation</keyword>
<sequence>MERERLIKTVEAILRGAGYRVARLDLKGSCFDLVASRLFLLLFIKATVNIDTITEEQAEDLKRLAKFFKASPLIVGLRSKSGELEEGVVYERFGIYALRPETLYDALLNNELPAVFAERGGLYVRINGELLRELREKHGYSVNELAQLLGVSRKSLLNYERGEQAVSLDVAIQLEEIFDEALAEPIDILRAKVEADLNVKPETPLEREVFERLKKLGLGLVKVKKAPFNAISTEDDIRLLTGIDERKTRSTIKRAEMVAEVGRIVNSGGVFILEKTKAEVVSEVPLIPKESLEEVKDADELIELIDKLKKEIKEKLFS</sequence>
<feature type="chain" id="PRO_0000144864" description="Putative HTH-type transcriptional regulatory protein TK0539">
    <location>
        <begin position="1"/>
        <end position="318"/>
    </location>
</feature>
<feature type="domain" description="HTH cro/C1-type" evidence="1">
    <location>
        <begin position="131"/>
        <end position="189"/>
    </location>
</feature>
<feature type="DNA-binding region" description="H-T-H motif" evidence="1">
    <location>
        <begin position="142"/>
        <end position="161"/>
    </location>
</feature>
<protein>
    <recommendedName>
        <fullName evidence="1">Putative HTH-type transcriptional regulatory protein TK0539</fullName>
    </recommendedName>
</protein>
<proteinExistence type="inferred from homology"/>
<accession>Q5JF28</accession>
<gene>
    <name type="ordered locus">TK0539</name>
</gene>